<reference key="1">
    <citation type="journal article" date="2008" name="J. Bacteriol.">
        <title>Complete genome sequence of the soil actinomycete Kocuria rhizophila.</title>
        <authorList>
            <person name="Takarada H."/>
            <person name="Sekine M."/>
            <person name="Kosugi H."/>
            <person name="Matsuo Y."/>
            <person name="Fujisawa T."/>
            <person name="Omata S."/>
            <person name="Kishi E."/>
            <person name="Shimizu A."/>
            <person name="Tsukatani N."/>
            <person name="Tanikawa S."/>
            <person name="Fujita N."/>
            <person name="Harayama S."/>
        </authorList>
    </citation>
    <scope>NUCLEOTIDE SEQUENCE [LARGE SCALE GENOMIC DNA]</scope>
    <source>
        <strain>ATCC 9341 / DSM 348 / NBRC 103217 / DC2201</strain>
    </source>
</reference>
<accession>B2GI87</accession>
<proteinExistence type="inferred from homology"/>
<name>CARB_KOCRD</name>
<protein>
    <recommendedName>
        <fullName evidence="1">Carbamoyl phosphate synthase large chain</fullName>
        <ecNumber evidence="1">6.3.4.16</ecNumber>
        <ecNumber evidence="1">6.3.5.5</ecNumber>
    </recommendedName>
    <alternativeName>
        <fullName evidence="1">Carbamoyl phosphate synthetase ammonia chain</fullName>
    </alternativeName>
</protein>
<feature type="chain" id="PRO_1000138891" description="Carbamoyl phosphate synthase large chain">
    <location>
        <begin position="1"/>
        <end position="1106"/>
    </location>
</feature>
<feature type="domain" description="ATP-grasp 1" evidence="1">
    <location>
        <begin position="133"/>
        <end position="328"/>
    </location>
</feature>
<feature type="domain" description="ATP-grasp 2" evidence="1">
    <location>
        <begin position="681"/>
        <end position="872"/>
    </location>
</feature>
<feature type="domain" description="MGS-like" evidence="1">
    <location>
        <begin position="954"/>
        <end position="1106"/>
    </location>
</feature>
<feature type="region of interest" description="Carboxyphosphate synthetic domain" evidence="1">
    <location>
        <begin position="1"/>
        <end position="402"/>
    </location>
</feature>
<feature type="region of interest" description="Oligomerization domain" evidence="1">
    <location>
        <begin position="403"/>
        <end position="550"/>
    </location>
</feature>
<feature type="region of interest" description="Carbamoyl phosphate synthetic domain" evidence="1">
    <location>
        <begin position="551"/>
        <end position="953"/>
    </location>
</feature>
<feature type="region of interest" description="Allosteric domain" evidence="1">
    <location>
        <begin position="954"/>
        <end position="1106"/>
    </location>
</feature>
<feature type="binding site" evidence="1">
    <location>
        <position position="129"/>
    </location>
    <ligand>
        <name>ATP</name>
        <dbReference type="ChEBI" id="CHEBI:30616"/>
        <label>1</label>
    </ligand>
</feature>
<feature type="binding site" evidence="1">
    <location>
        <position position="169"/>
    </location>
    <ligand>
        <name>ATP</name>
        <dbReference type="ChEBI" id="CHEBI:30616"/>
        <label>1</label>
    </ligand>
</feature>
<feature type="binding site" evidence="1">
    <location>
        <position position="175"/>
    </location>
    <ligand>
        <name>ATP</name>
        <dbReference type="ChEBI" id="CHEBI:30616"/>
        <label>1</label>
    </ligand>
</feature>
<feature type="binding site" evidence="1">
    <location>
        <position position="176"/>
    </location>
    <ligand>
        <name>ATP</name>
        <dbReference type="ChEBI" id="CHEBI:30616"/>
        <label>1</label>
    </ligand>
</feature>
<feature type="binding site" evidence="1">
    <location>
        <position position="208"/>
    </location>
    <ligand>
        <name>ATP</name>
        <dbReference type="ChEBI" id="CHEBI:30616"/>
        <label>1</label>
    </ligand>
</feature>
<feature type="binding site" evidence="1">
    <location>
        <position position="210"/>
    </location>
    <ligand>
        <name>ATP</name>
        <dbReference type="ChEBI" id="CHEBI:30616"/>
        <label>1</label>
    </ligand>
</feature>
<feature type="binding site" evidence="1">
    <location>
        <position position="215"/>
    </location>
    <ligand>
        <name>ATP</name>
        <dbReference type="ChEBI" id="CHEBI:30616"/>
        <label>1</label>
    </ligand>
</feature>
<feature type="binding site" evidence="1">
    <location>
        <position position="241"/>
    </location>
    <ligand>
        <name>ATP</name>
        <dbReference type="ChEBI" id="CHEBI:30616"/>
        <label>1</label>
    </ligand>
</feature>
<feature type="binding site" evidence="1">
    <location>
        <position position="242"/>
    </location>
    <ligand>
        <name>ATP</name>
        <dbReference type="ChEBI" id="CHEBI:30616"/>
        <label>1</label>
    </ligand>
</feature>
<feature type="binding site" evidence="1">
    <location>
        <position position="243"/>
    </location>
    <ligand>
        <name>ATP</name>
        <dbReference type="ChEBI" id="CHEBI:30616"/>
        <label>1</label>
    </ligand>
</feature>
<feature type="binding site" evidence="1">
    <location>
        <position position="285"/>
    </location>
    <ligand>
        <name>ATP</name>
        <dbReference type="ChEBI" id="CHEBI:30616"/>
        <label>1</label>
    </ligand>
</feature>
<feature type="binding site" evidence="1">
    <location>
        <position position="285"/>
    </location>
    <ligand>
        <name>Mg(2+)</name>
        <dbReference type="ChEBI" id="CHEBI:18420"/>
        <label>1</label>
    </ligand>
</feature>
<feature type="binding site" evidence="1">
    <location>
        <position position="285"/>
    </location>
    <ligand>
        <name>Mn(2+)</name>
        <dbReference type="ChEBI" id="CHEBI:29035"/>
        <label>1</label>
    </ligand>
</feature>
<feature type="binding site" evidence="1">
    <location>
        <position position="299"/>
    </location>
    <ligand>
        <name>ATP</name>
        <dbReference type="ChEBI" id="CHEBI:30616"/>
        <label>1</label>
    </ligand>
</feature>
<feature type="binding site" evidence="1">
    <location>
        <position position="299"/>
    </location>
    <ligand>
        <name>Mg(2+)</name>
        <dbReference type="ChEBI" id="CHEBI:18420"/>
        <label>1</label>
    </ligand>
</feature>
<feature type="binding site" evidence="1">
    <location>
        <position position="299"/>
    </location>
    <ligand>
        <name>Mg(2+)</name>
        <dbReference type="ChEBI" id="CHEBI:18420"/>
        <label>2</label>
    </ligand>
</feature>
<feature type="binding site" evidence="1">
    <location>
        <position position="299"/>
    </location>
    <ligand>
        <name>Mn(2+)</name>
        <dbReference type="ChEBI" id="CHEBI:29035"/>
        <label>1</label>
    </ligand>
</feature>
<feature type="binding site" evidence="1">
    <location>
        <position position="299"/>
    </location>
    <ligand>
        <name>Mn(2+)</name>
        <dbReference type="ChEBI" id="CHEBI:29035"/>
        <label>2</label>
    </ligand>
</feature>
<feature type="binding site" evidence="1">
    <location>
        <position position="301"/>
    </location>
    <ligand>
        <name>Mg(2+)</name>
        <dbReference type="ChEBI" id="CHEBI:18420"/>
        <label>2</label>
    </ligand>
</feature>
<feature type="binding site" evidence="1">
    <location>
        <position position="301"/>
    </location>
    <ligand>
        <name>Mn(2+)</name>
        <dbReference type="ChEBI" id="CHEBI:29035"/>
        <label>2</label>
    </ligand>
</feature>
<feature type="binding site" evidence="1">
    <location>
        <position position="717"/>
    </location>
    <ligand>
        <name>ATP</name>
        <dbReference type="ChEBI" id="CHEBI:30616"/>
        <label>2</label>
    </ligand>
</feature>
<feature type="binding site" evidence="1">
    <location>
        <position position="756"/>
    </location>
    <ligand>
        <name>ATP</name>
        <dbReference type="ChEBI" id="CHEBI:30616"/>
        <label>2</label>
    </ligand>
</feature>
<feature type="binding site" evidence="1">
    <location>
        <position position="758"/>
    </location>
    <ligand>
        <name>ATP</name>
        <dbReference type="ChEBI" id="CHEBI:30616"/>
        <label>2</label>
    </ligand>
</feature>
<feature type="binding site" evidence="1">
    <location>
        <position position="763"/>
    </location>
    <ligand>
        <name>ATP</name>
        <dbReference type="ChEBI" id="CHEBI:30616"/>
        <label>2</label>
    </ligand>
</feature>
<feature type="binding site" evidence="1">
    <location>
        <position position="788"/>
    </location>
    <ligand>
        <name>ATP</name>
        <dbReference type="ChEBI" id="CHEBI:30616"/>
        <label>2</label>
    </ligand>
</feature>
<feature type="binding site" evidence="1">
    <location>
        <position position="789"/>
    </location>
    <ligand>
        <name>ATP</name>
        <dbReference type="ChEBI" id="CHEBI:30616"/>
        <label>2</label>
    </ligand>
</feature>
<feature type="binding site" evidence="1">
    <location>
        <position position="790"/>
    </location>
    <ligand>
        <name>ATP</name>
        <dbReference type="ChEBI" id="CHEBI:30616"/>
        <label>2</label>
    </ligand>
</feature>
<feature type="binding site" evidence="1">
    <location>
        <position position="791"/>
    </location>
    <ligand>
        <name>ATP</name>
        <dbReference type="ChEBI" id="CHEBI:30616"/>
        <label>2</label>
    </ligand>
</feature>
<feature type="binding site" evidence="1">
    <location>
        <position position="831"/>
    </location>
    <ligand>
        <name>ATP</name>
        <dbReference type="ChEBI" id="CHEBI:30616"/>
        <label>2</label>
    </ligand>
</feature>
<feature type="binding site" evidence="1">
    <location>
        <position position="831"/>
    </location>
    <ligand>
        <name>Mg(2+)</name>
        <dbReference type="ChEBI" id="CHEBI:18420"/>
        <label>3</label>
    </ligand>
</feature>
<feature type="binding site" evidence="1">
    <location>
        <position position="831"/>
    </location>
    <ligand>
        <name>Mn(2+)</name>
        <dbReference type="ChEBI" id="CHEBI:29035"/>
        <label>3</label>
    </ligand>
</feature>
<feature type="binding site" evidence="1">
    <location>
        <position position="843"/>
    </location>
    <ligand>
        <name>ATP</name>
        <dbReference type="ChEBI" id="CHEBI:30616"/>
        <label>2</label>
    </ligand>
</feature>
<feature type="binding site" evidence="1">
    <location>
        <position position="843"/>
    </location>
    <ligand>
        <name>Mg(2+)</name>
        <dbReference type="ChEBI" id="CHEBI:18420"/>
        <label>3</label>
    </ligand>
</feature>
<feature type="binding site" evidence="1">
    <location>
        <position position="843"/>
    </location>
    <ligand>
        <name>Mg(2+)</name>
        <dbReference type="ChEBI" id="CHEBI:18420"/>
        <label>4</label>
    </ligand>
</feature>
<feature type="binding site" evidence="1">
    <location>
        <position position="843"/>
    </location>
    <ligand>
        <name>Mn(2+)</name>
        <dbReference type="ChEBI" id="CHEBI:29035"/>
        <label>3</label>
    </ligand>
</feature>
<feature type="binding site" evidence="1">
    <location>
        <position position="843"/>
    </location>
    <ligand>
        <name>Mn(2+)</name>
        <dbReference type="ChEBI" id="CHEBI:29035"/>
        <label>4</label>
    </ligand>
</feature>
<feature type="binding site" evidence="1">
    <location>
        <position position="845"/>
    </location>
    <ligand>
        <name>Mg(2+)</name>
        <dbReference type="ChEBI" id="CHEBI:18420"/>
        <label>4</label>
    </ligand>
</feature>
<feature type="binding site" evidence="1">
    <location>
        <position position="845"/>
    </location>
    <ligand>
        <name>Mn(2+)</name>
        <dbReference type="ChEBI" id="CHEBI:29035"/>
        <label>4</label>
    </ligand>
</feature>
<gene>
    <name evidence="1" type="primary">carB</name>
    <name type="ordered locus">KRH_13320</name>
</gene>
<keyword id="KW-0028">Amino-acid biosynthesis</keyword>
<keyword id="KW-0055">Arginine biosynthesis</keyword>
<keyword id="KW-0067">ATP-binding</keyword>
<keyword id="KW-0436">Ligase</keyword>
<keyword id="KW-0460">Magnesium</keyword>
<keyword id="KW-0464">Manganese</keyword>
<keyword id="KW-0479">Metal-binding</keyword>
<keyword id="KW-0547">Nucleotide-binding</keyword>
<keyword id="KW-0665">Pyrimidine biosynthesis</keyword>
<keyword id="KW-1185">Reference proteome</keyword>
<keyword id="KW-0677">Repeat</keyword>
<sequence>MPRRQDLNSVLVIGSGPIVIGQAAEFDYSGTQALRVLKDEGLRVILVNSNPATIMTDPEFADATYVEPITPETVEKIIAKERPDAVLPTLGGQTALNTALALDANGALEKYGVELIGADVDAINLGEDREAFKGVVERCGAESARSVIVHSMDEALAAAEQLGYPMVVRPSFTMGGLGSGLAYNETDLHRIAGAGIQYSPTSEVLLEESILGWKEYELEMMRDAKDNVVVVCSIENVDPVGVHTGDSVTVAPALTLTDREYQRMRDIAIAVIREVGVDTGGCNIQFAVEPDTGRVVVIEMNPRVSRSSALASKATGFPIAKIATKLSLGYTLDEIPNDITRKTPASFEPTLDYVVVKVPRFAFEKFPAADPTLTTTMKSVGEAMAIGRNFTEALQKAMRSLEQKGSAFSFARPAVEPGPNTVARLVSKTEETTTERLRNVQRALLAGATVEQVFGATSIDPWFLDQIQLLNETADLIREDPDLHPETLREAKRHGFSDAQIGELVHLDESVVRGIRHALDIRPVYKTVDTCAAEFEAFTPYHYSSYDRETEVAPHEKPSVMILGSGPNRIGQGIEFDYSCVHASMVLREAGYETVMVNCNPETVSTDYDISTRLYFEPLTFEDVMEVVEAERRTGGLLGVFVQLGGQTPLKLAADLKAAGVPILGTSPEAIDLAEDRGEFARVLTEAGLRQPKNGTAHDFEEASRIAHEIGYPVLVRPSYVLGGRGMEIVYDEASLKTYLDNATEVSPSRPALIDKFLEDAIEIDVDALFDGRDCYVGGIMEHIEEAGIHSGDSACVLPPITLAPDVVTRVREATEAIARGVGVKGLINLQFALASDVLYVIEANPRASRTVPFVSKATGVQMAKAAALIGTGRTVAQLRAEGVLPADHDGTTLPEGTPTAVKEVVLPFARFRTPEGTVVDSLLGPEMRSTGEVMGVDKYFDTAFAKAQAAAGGPLPTSGSLFVSVANKDKRSAVIPVKMFADLGFEIVSTGGTAEVLRRNGIESTVVAKIADAEGEEPTVADLITDGRIDLIFNTPSGGQAARGDGYQIRAAATSVGVPTMTTVSELGAALQAITAQRQYSWDVTSLQEHEQTLRERAAQEASRD</sequence>
<organism>
    <name type="scientific">Kocuria rhizophila (strain ATCC 9341 / DSM 348 / NBRC 103217 / DC2201)</name>
    <dbReference type="NCBI Taxonomy" id="378753"/>
    <lineage>
        <taxon>Bacteria</taxon>
        <taxon>Bacillati</taxon>
        <taxon>Actinomycetota</taxon>
        <taxon>Actinomycetes</taxon>
        <taxon>Micrococcales</taxon>
        <taxon>Micrococcaceae</taxon>
        <taxon>Kocuria</taxon>
    </lineage>
</organism>
<evidence type="ECO:0000255" key="1">
    <source>
        <dbReference type="HAMAP-Rule" id="MF_01210"/>
    </source>
</evidence>
<comment type="function">
    <text evidence="1">Large subunit of the glutamine-dependent carbamoyl phosphate synthetase (CPSase). CPSase catalyzes the formation of carbamoyl phosphate from the ammonia moiety of glutamine, carbonate, and phosphate donated by ATP, constituting the first step of 2 biosynthetic pathways, one leading to arginine and/or urea and the other to pyrimidine nucleotides. The large subunit (synthetase) binds the substrates ammonia (free or transferred from glutamine from the small subunit), hydrogencarbonate and ATP and carries out an ATP-coupled ligase reaction, activating hydrogencarbonate by forming carboxy phosphate which reacts with ammonia to form carbamoyl phosphate.</text>
</comment>
<comment type="catalytic activity">
    <reaction evidence="1">
        <text>hydrogencarbonate + L-glutamine + 2 ATP + H2O = carbamoyl phosphate + L-glutamate + 2 ADP + phosphate + 2 H(+)</text>
        <dbReference type="Rhea" id="RHEA:18633"/>
        <dbReference type="ChEBI" id="CHEBI:15377"/>
        <dbReference type="ChEBI" id="CHEBI:15378"/>
        <dbReference type="ChEBI" id="CHEBI:17544"/>
        <dbReference type="ChEBI" id="CHEBI:29985"/>
        <dbReference type="ChEBI" id="CHEBI:30616"/>
        <dbReference type="ChEBI" id="CHEBI:43474"/>
        <dbReference type="ChEBI" id="CHEBI:58228"/>
        <dbReference type="ChEBI" id="CHEBI:58359"/>
        <dbReference type="ChEBI" id="CHEBI:456216"/>
        <dbReference type="EC" id="6.3.5.5"/>
    </reaction>
</comment>
<comment type="catalytic activity">
    <molecule>Carbamoyl phosphate synthase large chain</molecule>
    <reaction evidence="1">
        <text>hydrogencarbonate + NH4(+) + 2 ATP = carbamoyl phosphate + 2 ADP + phosphate + 2 H(+)</text>
        <dbReference type="Rhea" id="RHEA:18029"/>
        <dbReference type="ChEBI" id="CHEBI:15378"/>
        <dbReference type="ChEBI" id="CHEBI:17544"/>
        <dbReference type="ChEBI" id="CHEBI:28938"/>
        <dbReference type="ChEBI" id="CHEBI:30616"/>
        <dbReference type="ChEBI" id="CHEBI:43474"/>
        <dbReference type="ChEBI" id="CHEBI:58228"/>
        <dbReference type="ChEBI" id="CHEBI:456216"/>
        <dbReference type="EC" id="6.3.4.16"/>
    </reaction>
</comment>
<comment type="cofactor">
    <cofactor evidence="1">
        <name>Mg(2+)</name>
        <dbReference type="ChEBI" id="CHEBI:18420"/>
    </cofactor>
    <cofactor evidence="1">
        <name>Mn(2+)</name>
        <dbReference type="ChEBI" id="CHEBI:29035"/>
    </cofactor>
    <text evidence="1">Binds 4 Mg(2+) or Mn(2+) ions per subunit.</text>
</comment>
<comment type="pathway">
    <text evidence="1">Amino-acid biosynthesis; L-arginine biosynthesis; carbamoyl phosphate from bicarbonate: step 1/1.</text>
</comment>
<comment type="pathway">
    <text evidence="1">Pyrimidine metabolism; UMP biosynthesis via de novo pathway; (S)-dihydroorotate from bicarbonate: step 1/3.</text>
</comment>
<comment type="subunit">
    <text evidence="1">Composed of two chains; the small (or glutamine) chain promotes the hydrolysis of glutamine to ammonia, which is used by the large (or ammonia) chain to synthesize carbamoyl phosphate. Tetramer of heterodimers (alpha,beta)4.</text>
</comment>
<comment type="domain">
    <text evidence="1">The large subunit is composed of 2 ATP-grasp domains that are involved in binding the 2 ATP molecules needed for carbamoyl phosphate synthesis. The N-terminal ATP-grasp domain (referred to as the carboxyphosphate synthetic component) catalyzes the ATP-dependent phosphorylation of hydrogencarbonate to carboxyphosphate and the subsequent nucleophilic attack by ammonia to form a carbamate intermediate. The C-terminal ATP-grasp domain (referred to as the carbamoyl phosphate synthetic component) then catalyzes the phosphorylation of carbamate with the second ATP to form the end product carbamoyl phosphate. The reactive and unstable enzyme intermediates are sequentially channeled from one active site to the next through the interior of the protein over a distance of at least 96 A.</text>
</comment>
<comment type="similarity">
    <text evidence="1">Belongs to the CarB family.</text>
</comment>
<dbReference type="EC" id="6.3.4.16" evidence="1"/>
<dbReference type="EC" id="6.3.5.5" evidence="1"/>
<dbReference type="EMBL" id="AP009152">
    <property type="protein sequence ID" value="BAG29679.1"/>
    <property type="molecule type" value="Genomic_DNA"/>
</dbReference>
<dbReference type="RefSeq" id="WP_012398400.1">
    <property type="nucleotide sequence ID" value="NC_010617.1"/>
</dbReference>
<dbReference type="SMR" id="B2GI87"/>
<dbReference type="STRING" id="378753.KRH_13320"/>
<dbReference type="KEGG" id="krh:KRH_13320"/>
<dbReference type="eggNOG" id="COG0458">
    <property type="taxonomic scope" value="Bacteria"/>
</dbReference>
<dbReference type="HOGENOM" id="CLU_000513_1_0_11"/>
<dbReference type="OrthoDB" id="9804197at2"/>
<dbReference type="UniPathway" id="UPA00068">
    <property type="reaction ID" value="UER00171"/>
</dbReference>
<dbReference type="UniPathway" id="UPA00070">
    <property type="reaction ID" value="UER00115"/>
</dbReference>
<dbReference type="Proteomes" id="UP000008838">
    <property type="component" value="Chromosome"/>
</dbReference>
<dbReference type="GO" id="GO:0005737">
    <property type="term" value="C:cytoplasm"/>
    <property type="evidence" value="ECO:0007669"/>
    <property type="project" value="TreeGrafter"/>
</dbReference>
<dbReference type="GO" id="GO:0005524">
    <property type="term" value="F:ATP binding"/>
    <property type="evidence" value="ECO:0007669"/>
    <property type="project" value="UniProtKB-UniRule"/>
</dbReference>
<dbReference type="GO" id="GO:0004087">
    <property type="term" value="F:carbamoyl-phosphate synthase (ammonia) activity"/>
    <property type="evidence" value="ECO:0007669"/>
    <property type="project" value="RHEA"/>
</dbReference>
<dbReference type="GO" id="GO:0004088">
    <property type="term" value="F:carbamoyl-phosphate synthase (glutamine-hydrolyzing) activity"/>
    <property type="evidence" value="ECO:0007669"/>
    <property type="project" value="UniProtKB-UniRule"/>
</dbReference>
<dbReference type="GO" id="GO:0046872">
    <property type="term" value="F:metal ion binding"/>
    <property type="evidence" value="ECO:0007669"/>
    <property type="project" value="UniProtKB-KW"/>
</dbReference>
<dbReference type="GO" id="GO:0044205">
    <property type="term" value="P:'de novo' UMP biosynthetic process"/>
    <property type="evidence" value="ECO:0007669"/>
    <property type="project" value="UniProtKB-UniRule"/>
</dbReference>
<dbReference type="GO" id="GO:0006541">
    <property type="term" value="P:glutamine metabolic process"/>
    <property type="evidence" value="ECO:0007669"/>
    <property type="project" value="TreeGrafter"/>
</dbReference>
<dbReference type="GO" id="GO:0006526">
    <property type="term" value="P:L-arginine biosynthetic process"/>
    <property type="evidence" value="ECO:0007669"/>
    <property type="project" value="UniProtKB-UniRule"/>
</dbReference>
<dbReference type="CDD" id="cd01424">
    <property type="entry name" value="MGS_CPS_II"/>
    <property type="match status" value="1"/>
</dbReference>
<dbReference type="FunFam" id="1.10.1030.10:FF:000002">
    <property type="entry name" value="Carbamoyl-phosphate synthase large chain"/>
    <property type="match status" value="1"/>
</dbReference>
<dbReference type="FunFam" id="3.30.1490.20:FF:000001">
    <property type="entry name" value="Carbamoyl-phosphate synthase large chain"/>
    <property type="match status" value="1"/>
</dbReference>
<dbReference type="FunFam" id="3.30.470.20:FF:000007">
    <property type="entry name" value="Carbamoyl-phosphate synthase large chain"/>
    <property type="match status" value="1"/>
</dbReference>
<dbReference type="FunFam" id="3.30.470.20:FF:000014">
    <property type="entry name" value="Carbamoyl-phosphate synthase large chain"/>
    <property type="match status" value="1"/>
</dbReference>
<dbReference type="FunFam" id="3.40.50.20:FF:000001">
    <property type="entry name" value="Carbamoyl-phosphate synthase large chain"/>
    <property type="match status" value="2"/>
</dbReference>
<dbReference type="Gene3D" id="3.40.50.20">
    <property type="match status" value="2"/>
</dbReference>
<dbReference type="Gene3D" id="3.30.1490.20">
    <property type="entry name" value="ATP-grasp fold, A domain"/>
    <property type="match status" value="1"/>
</dbReference>
<dbReference type="Gene3D" id="3.30.470.20">
    <property type="entry name" value="ATP-grasp fold, B domain"/>
    <property type="match status" value="2"/>
</dbReference>
<dbReference type="Gene3D" id="1.10.1030.10">
    <property type="entry name" value="Carbamoyl-phosphate synthetase, large subunit oligomerisation domain"/>
    <property type="match status" value="1"/>
</dbReference>
<dbReference type="Gene3D" id="3.40.50.1380">
    <property type="entry name" value="Methylglyoxal synthase-like domain"/>
    <property type="match status" value="1"/>
</dbReference>
<dbReference type="HAMAP" id="MF_01210_B">
    <property type="entry name" value="CPSase_L_chain_B"/>
    <property type="match status" value="1"/>
</dbReference>
<dbReference type="InterPro" id="IPR011761">
    <property type="entry name" value="ATP-grasp"/>
</dbReference>
<dbReference type="InterPro" id="IPR013815">
    <property type="entry name" value="ATP_grasp_subdomain_1"/>
</dbReference>
<dbReference type="InterPro" id="IPR006275">
    <property type="entry name" value="CarbamoylP_synth_lsu"/>
</dbReference>
<dbReference type="InterPro" id="IPR005480">
    <property type="entry name" value="CarbamoylP_synth_lsu_oligo"/>
</dbReference>
<dbReference type="InterPro" id="IPR036897">
    <property type="entry name" value="CarbamoylP_synth_lsu_oligo_sf"/>
</dbReference>
<dbReference type="InterPro" id="IPR005479">
    <property type="entry name" value="CbamoylP_synth_lsu-like_ATP-bd"/>
</dbReference>
<dbReference type="InterPro" id="IPR005483">
    <property type="entry name" value="CbamoylP_synth_lsu_CPSase_dom"/>
</dbReference>
<dbReference type="InterPro" id="IPR011607">
    <property type="entry name" value="MGS-like_dom"/>
</dbReference>
<dbReference type="InterPro" id="IPR036914">
    <property type="entry name" value="MGS-like_dom_sf"/>
</dbReference>
<dbReference type="InterPro" id="IPR033937">
    <property type="entry name" value="MGS_CPS_CarB"/>
</dbReference>
<dbReference type="InterPro" id="IPR016185">
    <property type="entry name" value="PreATP-grasp_dom_sf"/>
</dbReference>
<dbReference type="NCBIfam" id="TIGR01369">
    <property type="entry name" value="CPSaseII_lrg"/>
    <property type="match status" value="1"/>
</dbReference>
<dbReference type="NCBIfam" id="NF003671">
    <property type="entry name" value="PRK05294.1"/>
    <property type="match status" value="1"/>
</dbReference>
<dbReference type="NCBIfam" id="NF009455">
    <property type="entry name" value="PRK12815.1"/>
    <property type="match status" value="1"/>
</dbReference>
<dbReference type="PANTHER" id="PTHR11405:SF53">
    <property type="entry name" value="CARBAMOYL-PHOSPHATE SYNTHASE [AMMONIA], MITOCHONDRIAL"/>
    <property type="match status" value="1"/>
</dbReference>
<dbReference type="PANTHER" id="PTHR11405">
    <property type="entry name" value="CARBAMOYLTRANSFERASE FAMILY MEMBER"/>
    <property type="match status" value="1"/>
</dbReference>
<dbReference type="Pfam" id="PF02786">
    <property type="entry name" value="CPSase_L_D2"/>
    <property type="match status" value="2"/>
</dbReference>
<dbReference type="Pfam" id="PF02787">
    <property type="entry name" value="CPSase_L_D3"/>
    <property type="match status" value="1"/>
</dbReference>
<dbReference type="Pfam" id="PF02142">
    <property type="entry name" value="MGS"/>
    <property type="match status" value="1"/>
</dbReference>
<dbReference type="PRINTS" id="PR00098">
    <property type="entry name" value="CPSASE"/>
</dbReference>
<dbReference type="SMART" id="SM01096">
    <property type="entry name" value="CPSase_L_D3"/>
    <property type="match status" value="1"/>
</dbReference>
<dbReference type="SMART" id="SM00851">
    <property type="entry name" value="MGS"/>
    <property type="match status" value="1"/>
</dbReference>
<dbReference type="SUPFAM" id="SSF48108">
    <property type="entry name" value="Carbamoyl phosphate synthetase, large subunit connection domain"/>
    <property type="match status" value="1"/>
</dbReference>
<dbReference type="SUPFAM" id="SSF56059">
    <property type="entry name" value="Glutathione synthetase ATP-binding domain-like"/>
    <property type="match status" value="2"/>
</dbReference>
<dbReference type="SUPFAM" id="SSF52335">
    <property type="entry name" value="Methylglyoxal synthase-like"/>
    <property type="match status" value="1"/>
</dbReference>
<dbReference type="SUPFAM" id="SSF52440">
    <property type="entry name" value="PreATP-grasp domain"/>
    <property type="match status" value="2"/>
</dbReference>
<dbReference type="PROSITE" id="PS50975">
    <property type="entry name" value="ATP_GRASP"/>
    <property type="match status" value="2"/>
</dbReference>
<dbReference type="PROSITE" id="PS00866">
    <property type="entry name" value="CPSASE_1"/>
    <property type="match status" value="2"/>
</dbReference>
<dbReference type="PROSITE" id="PS00867">
    <property type="entry name" value="CPSASE_2"/>
    <property type="match status" value="2"/>
</dbReference>
<dbReference type="PROSITE" id="PS51855">
    <property type="entry name" value="MGS"/>
    <property type="match status" value="1"/>
</dbReference>